<keyword id="KW-0067">ATP-binding</keyword>
<keyword id="KW-0143">Chaperone</keyword>
<keyword id="KW-0547">Nucleotide-binding</keyword>
<dbReference type="EMBL" id="CP000964">
    <property type="protein sequence ID" value="ACI08935.1"/>
    <property type="molecule type" value="Genomic_DNA"/>
</dbReference>
<dbReference type="SMR" id="B5XNK1"/>
<dbReference type="KEGG" id="kpe:KPK_1261"/>
<dbReference type="HOGENOM" id="CLU_005965_2_1_6"/>
<dbReference type="Proteomes" id="UP000001734">
    <property type="component" value="Chromosome"/>
</dbReference>
<dbReference type="GO" id="GO:0005524">
    <property type="term" value="F:ATP binding"/>
    <property type="evidence" value="ECO:0007669"/>
    <property type="project" value="UniProtKB-KW"/>
</dbReference>
<dbReference type="GO" id="GO:0016887">
    <property type="term" value="F:ATP hydrolysis activity"/>
    <property type="evidence" value="ECO:0007669"/>
    <property type="project" value="UniProtKB-UniRule"/>
</dbReference>
<dbReference type="GO" id="GO:0140662">
    <property type="term" value="F:ATP-dependent protein folding chaperone"/>
    <property type="evidence" value="ECO:0007669"/>
    <property type="project" value="InterPro"/>
</dbReference>
<dbReference type="GO" id="GO:0051082">
    <property type="term" value="F:unfolded protein binding"/>
    <property type="evidence" value="ECO:0007669"/>
    <property type="project" value="InterPro"/>
</dbReference>
<dbReference type="GO" id="GO:0016226">
    <property type="term" value="P:iron-sulfur cluster assembly"/>
    <property type="evidence" value="ECO:0007669"/>
    <property type="project" value="InterPro"/>
</dbReference>
<dbReference type="CDD" id="cd10236">
    <property type="entry name" value="ASKHA_NBD_HSP70_HscA"/>
    <property type="match status" value="1"/>
</dbReference>
<dbReference type="FunFam" id="1.20.1270.10:FF:000006">
    <property type="entry name" value="Chaperone protein HscA"/>
    <property type="match status" value="1"/>
</dbReference>
<dbReference type="FunFam" id="3.30.420.40:FF:000046">
    <property type="entry name" value="Chaperone protein HscA"/>
    <property type="match status" value="1"/>
</dbReference>
<dbReference type="FunFam" id="3.90.640.10:FF:000013">
    <property type="entry name" value="Chaperone protein HscA"/>
    <property type="match status" value="1"/>
</dbReference>
<dbReference type="FunFam" id="2.60.34.10:FF:000005">
    <property type="entry name" value="Chaperone protein HscA homolog"/>
    <property type="match status" value="1"/>
</dbReference>
<dbReference type="Gene3D" id="1.20.1270.10">
    <property type="match status" value="1"/>
</dbReference>
<dbReference type="Gene3D" id="3.30.420.40">
    <property type="match status" value="2"/>
</dbReference>
<dbReference type="Gene3D" id="3.90.640.10">
    <property type="entry name" value="Actin, Chain A, domain 4"/>
    <property type="match status" value="1"/>
</dbReference>
<dbReference type="Gene3D" id="2.60.34.10">
    <property type="entry name" value="Substrate Binding Domain Of DNAk, Chain A, domain 1"/>
    <property type="match status" value="1"/>
</dbReference>
<dbReference type="HAMAP" id="MF_00679">
    <property type="entry name" value="HscA"/>
    <property type="match status" value="1"/>
</dbReference>
<dbReference type="InterPro" id="IPR043129">
    <property type="entry name" value="ATPase_NBD"/>
</dbReference>
<dbReference type="InterPro" id="IPR018181">
    <property type="entry name" value="Heat_shock_70_CS"/>
</dbReference>
<dbReference type="InterPro" id="IPR042039">
    <property type="entry name" value="HscA_NBD"/>
</dbReference>
<dbReference type="InterPro" id="IPR029048">
    <property type="entry name" value="HSP70_C_sf"/>
</dbReference>
<dbReference type="InterPro" id="IPR029047">
    <property type="entry name" value="HSP70_peptide-bd_sf"/>
</dbReference>
<dbReference type="InterPro" id="IPR013126">
    <property type="entry name" value="Hsp_70_fam"/>
</dbReference>
<dbReference type="InterPro" id="IPR010236">
    <property type="entry name" value="ISC_FeS_clus_asmbl_HscA"/>
</dbReference>
<dbReference type="NCBIfam" id="TIGR01991">
    <property type="entry name" value="HscA"/>
    <property type="match status" value="1"/>
</dbReference>
<dbReference type="NCBIfam" id="NF003520">
    <property type="entry name" value="PRK05183.1"/>
    <property type="match status" value="1"/>
</dbReference>
<dbReference type="PANTHER" id="PTHR19375">
    <property type="entry name" value="HEAT SHOCK PROTEIN 70KDA"/>
    <property type="match status" value="1"/>
</dbReference>
<dbReference type="Pfam" id="PF00012">
    <property type="entry name" value="HSP70"/>
    <property type="match status" value="1"/>
</dbReference>
<dbReference type="PRINTS" id="PR00301">
    <property type="entry name" value="HEATSHOCK70"/>
</dbReference>
<dbReference type="SUPFAM" id="SSF53067">
    <property type="entry name" value="Actin-like ATPase domain"/>
    <property type="match status" value="2"/>
</dbReference>
<dbReference type="SUPFAM" id="SSF100934">
    <property type="entry name" value="Heat shock protein 70kD (HSP70), C-terminal subdomain"/>
    <property type="match status" value="1"/>
</dbReference>
<dbReference type="SUPFAM" id="SSF100920">
    <property type="entry name" value="Heat shock protein 70kD (HSP70), peptide-binding domain"/>
    <property type="match status" value="1"/>
</dbReference>
<dbReference type="PROSITE" id="PS00297">
    <property type="entry name" value="HSP70_1"/>
    <property type="match status" value="1"/>
</dbReference>
<dbReference type="PROSITE" id="PS00329">
    <property type="entry name" value="HSP70_2"/>
    <property type="match status" value="1"/>
</dbReference>
<dbReference type="PROSITE" id="PS01036">
    <property type="entry name" value="HSP70_3"/>
    <property type="match status" value="1"/>
</dbReference>
<proteinExistence type="inferred from homology"/>
<feature type="chain" id="PRO_1000131681" description="Chaperone protein HscA">
    <location>
        <begin position="1"/>
        <end position="616"/>
    </location>
</feature>
<evidence type="ECO:0000255" key="1">
    <source>
        <dbReference type="HAMAP-Rule" id="MF_00679"/>
    </source>
</evidence>
<name>HSCA_KLEP3</name>
<protein>
    <recommendedName>
        <fullName evidence="1">Chaperone protein HscA</fullName>
    </recommendedName>
    <alternativeName>
        <fullName evidence="1">Hsc66</fullName>
    </alternativeName>
</protein>
<organism>
    <name type="scientific">Klebsiella pneumoniae (strain 342)</name>
    <dbReference type="NCBI Taxonomy" id="507522"/>
    <lineage>
        <taxon>Bacteria</taxon>
        <taxon>Pseudomonadati</taxon>
        <taxon>Pseudomonadota</taxon>
        <taxon>Gammaproteobacteria</taxon>
        <taxon>Enterobacterales</taxon>
        <taxon>Enterobacteriaceae</taxon>
        <taxon>Klebsiella/Raoultella group</taxon>
        <taxon>Klebsiella</taxon>
        <taxon>Klebsiella pneumoniae complex</taxon>
    </lineage>
</organism>
<comment type="function">
    <text evidence="1">Chaperone involved in the maturation of iron-sulfur cluster-containing proteins. Has a low intrinsic ATPase activity which is markedly stimulated by HscB. Involved in the maturation of IscU.</text>
</comment>
<comment type="similarity">
    <text evidence="1">Belongs to the heat shock protein 70 family.</text>
</comment>
<reference key="1">
    <citation type="journal article" date="2008" name="PLoS Genet.">
        <title>Complete genome sequence of the N2-fixing broad host range endophyte Klebsiella pneumoniae 342 and virulence predictions verified in mice.</title>
        <authorList>
            <person name="Fouts D.E."/>
            <person name="Tyler H.L."/>
            <person name="DeBoy R.T."/>
            <person name="Daugherty S."/>
            <person name="Ren Q."/>
            <person name="Badger J.H."/>
            <person name="Durkin A.S."/>
            <person name="Huot H."/>
            <person name="Shrivastava S."/>
            <person name="Kothari S."/>
            <person name="Dodson R.J."/>
            <person name="Mohamoud Y."/>
            <person name="Khouri H."/>
            <person name="Roesch L.F.W."/>
            <person name="Krogfelt K.A."/>
            <person name="Struve C."/>
            <person name="Triplett E.W."/>
            <person name="Methe B.A."/>
        </authorList>
    </citation>
    <scope>NUCLEOTIDE SEQUENCE [LARGE SCALE GENOMIC DNA]</scope>
    <source>
        <strain>342</strain>
    </source>
</reference>
<sequence>MALLQISEPGLSAAPHQRRLAAGIDLGTTNSLVATVRSGQAETLPDHQGRYLLPSVVNYHASGLTVGYEARLNAAQDPVNTISSVKRMMGRSLADIQTRYPHLPYQLQASENGLPMIQTAGGLLNPVRVSADILKALAARATEALAGDLDGVVITVPAYFDDAQRQGTKDAARLAGLHVLRLLNEPTAAAIAYGLDSGQEGVIAVYDLGGGTFDISILRLSRGVFEVLATGGDSALGGDDFDHLLADYLREQAGLSDRSDNRLQRELLDAAIAAKIALSDADVAHVEVGGWQGDITRSQFNDLIAPLVKRTLMACRRALKDAGVEAQEVLEVVMVGGSTRVPLVRERVGEFFGRTPLTSIDPDKVVAIGAAIQADILVGNKPDSELLLLDVIPLSLGLETMGGLVEKVIPRNTTIPVARAQEFTTFKDGQTAMSIHVMQGERELVQDCRSLARFALRGIPALPAGGAHIRVTFQVDADGLLSVTAMEKSTGVEASIQVKPSYGLTDGEIANMIKDSMSYAEQDIQARMLAEQKVEAARVLESLESALAADAALLSAAERQVIDAAAEQVRAAAAGEDADAIKEAIKNIDTQTQEFAARRMDQSVRAALKGQSVDEV</sequence>
<gene>
    <name evidence="1" type="primary">hscA</name>
    <name type="ordered locus">KPK_1261</name>
</gene>
<accession>B5XNK1</accession>